<feature type="chain" id="PRO_0000379958" description="E3 ubiquitin-protein ligase XIAP">
    <location>
        <begin position="1"/>
        <end position="492"/>
    </location>
</feature>
<feature type="repeat" description="BIR 1" evidence="4">
    <location>
        <begin position="40"/>
        <end position="105"/>
    </location>
</feature>
<feature type="repeat" description="BIR 2" evidence="4">
    <location>
        <begin position="172"/>
        <end position="237"/>
    </location>
</feature>
<feature type="repeat" description="BIR 3" evidence="4">
    <location>
        <begin position="271"/>
        <end position="334"/>
    </location>
</feature>
<feature type="zinc finger region" description="RING-type" evidence="6">
    <location>
        <begin position="445"/>
        <end position="480"/>
    </location>
</feature>
<feature type="binding site" evidence="2 5">
    <location>
        <position position="303"/>
    </location>
    <ligand>
        <name>Zn(2+)</name>
        <dbReference type="ChEBI" id="CHEBI:29105"/>
    </ligand>
</feature>
<feature type="binding site" evidence="2 5">
    <location>
        <position position="306"/>
    </location>
    <ligand>
        <name>Zn(2+)</name>
        <dbReference type="ChEBI" id="CHEBI:29105"/>
    </ligand>
</feature>
<feature type="binding site" evidence="2 5">
    <location>
        <position position="323"/>
    </location>
    <ligand>
        <name>Zn(2+)</name>
        <dbReference type="ChEBI" id="CHEBI:29105"/>
    </ligand>
</feature>
<feature type="binding site" evidence="2 5">
    <location>
        <position position="330"/>
    </location>
    <ligand>
        <name>Zn(2+)</name>
        <dbReference type="ChEBI" id="CHEBI:29105"/>
    </ligand>
</feature>
<evidence type="ECO:0000250" key="1">
    <source>
        <dbReference type="UniProtKB" id="A5D8Q0"/>
    </source>
</evidence>
<evidence type="ECO:0000250" key="2">
    <source>
        <dbReference type="UniProtKB" id="O15392"/>
    </source>
</evidence>
<evidence type="ECO:0000250" key="3">
    <source>
        <dbReference type="UniProtKB" id="P98170"/>
    </source>
</evidence>
<evidence type="ECO:0000255" key="4"/>
<evidence type="ECO:0000255" key="5">
    <source>
        <dbReference type="PROSITE-ProRule" id="PRU00029"/>
    </source>
</evidence>
<evidence type="ECO:0000255" key="6">
    <source>
        <dbReference type="PROSITE-ProRule" id="PRU00175"/>
    </source>
</evidence>
<evidence type="ECO:0000312" key="7">
    <source>
        <dbReference type="EMBL" id="AAH91027.1"/>
    </source>
</evidence>
<sequence>MEPQLAEFVLKEEMTCQCPKMSDGAYDMDVDQNYFEEEVRLASFANFPSSYPVSAPALARAGFYYTGDGDRVKCFSCLAMVEGWQHGDTAIGKHRKISPNCKFINGFNNLRSDCILTQVPVMQNGFQNSAEDLAERSSSEIMADYLLRTGRVVDMSTPKYPRHMEMCSEEARLQTFQNWPAYSPLTPKELANAGLFYTGINDQVKCFCCGGKLMNWEPSDKAWTEHKKHFPECYFVLGRDVGNVATEANTHGGRRRGSELACPAMNDYNARLETFSSWSFPIDKETLAKAGFYSIGDGDATKCFHCGGVLNCWSATDDPWEEHAKAYPGCKFLIDEKGQHFINHAQLKRPILHKANSADASPALPKDSNLLKSPLVTDAQQMGFPLEEIKKVMGQKLKTTGKNYTCVEEFVSDLCAQKETVLEKPKEIEISLEEKLRQLEEEKICKVCMDRRISIVFIPCGHLVACAVCADVLDKCPICCTIVERRQKIFMS</sequence>
<organism>
    <name type="scientific">Xenopus tropicalis</name>
    <name type="common">Western clawed frog</name>
    <name type="synonym">Silurana tropicalis</name>
    <dbReference type="NCBI Taxonomy" id="8364"/>
    <lineage>
        <taxon>Eukaryota</taxon>
        <taxon>Metazoa</taxon>
        <taxon>Chordata</taxon>
        <taxon>Craniata</taxon>
        <taxon>Vertebrata</taxon>
        <taxon>Euteleostomi</taxon>
        <taxon>Amphibia</taxon>
        <taxon>Batrachia</taxon>
        <taxon>Anura</taxon>
        <taxon>Pipoidea</taxon>
        <taxon>Pipidae</taxon>
        <taxon>Xenopodinae</taxon>
        <taxon>Xenopus</taxon>
        <taxon>Silurana</taxon>
    </lineage>
</organism>
<proteinExistence type="evidence at transcript level"/>
<comment type="function">
    <text evidence="1 3">Multi-functional protein which regulates not only caspases and apoptosis, but also acts as an E3 ubiquitin-protein ligase mediating ubiquitination and subsequent proteasomal degradation of its target proteins. Acts as a direct caspase inhibitor. E3 ubiquitin-protein ligase that acts as an important regulator of innate immunity by mediating 'Lys-63'-linked polyubiquitination of ripk2 downstream of NOD1 and NOD2, thereby transforming ripk2 into a scaffolding protein for downstream effectors, ultimately leading to activation of the NF-kappa-B and MAP kinases signaling (By similarity). A key apoptotic suppressor in eggs. Acts as a positive regulator of Wnt signaling (By similarity).</text>
</comment>
<comment type="catalytic activity">
    <reaction evidence="3">
        <text>S-ubiquitinyl-[E2 ubiquitin-conjugating enzyme]-L-cysteine + [acceptor protein]-L-lysine = [E2 ubiquitin-conjugating enzyme]-L-cysteine + N(6)-ubiquitinyl-[acceptor protein]-L-lysine.</text>
        <dbReference type="EC" id="2.3.2.27"/>
    </reaction>
</comment>
<comment type="subunit">
    <text evidence="3">Monomer, and homodimer.</text>
</comment>
<comment type="subcellular location">
    <subcellularLocation>
        <location evidence="3">Cytoplasm</location>
    </subcellularLocation>
</comment>
<comment type="domain">
    <text evidence="1">The BIR and RING-type domains are dispensable for anti-apoptotic function.</text>
</comment>
<comment type="PTM">
    <text evidence="1">Degraded in a 2-step mechanism; a caspase-independent first step and a caspase-dependent second step. Stabilized indirectly by MAPK, which acts to delay caspase activation, rather than directly phosphorylating xiap.</text>
</comment>
<comment type="similarity">
    <text evidence="4">Belongs to the IAP family.</text>
</comment>
<protein>
    <recommendedName>
        <fullName evidence="3">E3 ubiquitin-protein ligase XIAP</fullName>
        <ecNumber evidence="3">2.3.2.27</ecNumber>
    </recommendedName>
    <alternativeName>
        <fullName evidence="3">Baculoviral IAP repeat-containing protein 4</fullName>
    </alternativeName>
    <alternativeName>
        <fullName>RING-type E3 ubiquitin transferase XIAP</fullName>
    </alternativeName>
    <alternativeName>
        <fullName evidence="1">X-linked inhibitor of apoptosis protein</fullName>
        <shortName evidence="1">X-linked IAP</shortName>
    </alternativeName>
</protein>
<name>XIAP_XENTR</name>
<accession>Q5BKL8</accession>
<dbReference type="EC" id="2.3.2.27" evidence="3"/>
<dbReference type="EMBL" id="BC091027">
    <property type="protein sequence ID" value="AAH91027.1"/>
    <property type="molecule type" value="mRNA"/>
</dbReference>
<dbReference type="RefSeq" id="NP_001025583.1">
    <property type="nucleotide sequence ID" value="NM_001030412.1"/>
</dbReference>
<dbReference type="SMR" id="Q5BKL8"/>
<dbReference type="FunCoup" id="Q5BKL8">
    <property type="interactions" value="4512"/>
</dbReference>
<dbReference type="STRING" id="8364.ENSXETP00000046475"/>
<dbReference type="DNASU" id="594971"/>
<dbReference type="GeneID" id="594971"/>
<dbReference type="KEGG" id="xtr:594971"/>
<dbReference type="AGR" id="Xenbase:XB-GENE-948846"/>
<dbReference type="CTD" id="331"/>
<dbReference type="Xenbase" id="XB-GENE-948846">
    <property type="gene designation" value="xiap"/>
</dbReference>
<dbReference type="eggNOG" id="KOG1101">
    <property type="taxonomic scope" value="Eukaryota"/>
</dbReference>
<dbReference type="InParanoid" id="Q5BKL8"/>
<dbReference type="OrthoDB" id="5855668at2759"/>
<dbReference type="Reactome" id="R-XTR-111459">
    <property type="pathway name" value="Activation of caspases through apoptosome-mediated cleavage"/>
</dbReference>
<dbReference type="Reactome" id="R-XTR-111463">
    <property type="pathway name" value="SMAC (DIABLO) binds to IAPs"/>
</dbReference>
<dbReference type="Reactome" id="R-XTR-111464">
    <property type="pathway name" value="SMAC(DIABLO)-mediated dissociation of IAP:caspase complexes"/>
</dbReference>
<dbReference type="Reactome" id="R-XTR-111469">
    <property type="pathway name" value="SMAC, XIAP-regulated apoptotic response"/>
</dbReference>
<dbReference type="Reactome" id="R-XTR-3769402">
    <property type="pathway name" value="Deactivation of the beta-catenin transactivating complex"/>
</dbReference>
<dbReference type="Reactome" id="R-XTR-5357956">
    <property type="pathway name" value="TNFR1-induced NF-kappa-B signaling pathway"/>
</dbReference>
<dbReference type="Reactome" id="R-XTR-5675482">
    <property type="pathway name" value="Regulation of necroptotic cell death"/>
</dbReference>
<dbReference type="Reactome" id="R-XTR-8948747">
    <property type="pathway name" value="Regulation of PTEN localization"/>
</dbReference>
<dbReference type="Reactome" id="R-XTR-8948751">
    <property type="pathway name" value="Regulation of PTEN stability and activity"/>
</dbReference>
<dbReference type="Reactome" id="R-XTR-9627069">
    <property type="pathway name" value="Regulation of the apoptosome activity"/>
</dbReference>
<dbReference type="Proteomes" id="UP000008143">
    <property type="component" value="Chromosome 8"/>
</dbReference>
<dbReference type="Bgee" id="ENSXETG00000016194">
    <property type="expression patterns" value="Expressed in egg cell and 14 other cell types or tissues"/>
</dbReference>
<dbReference type="ExpressionAtlas" id="Q5BKL8">
    <property type="expression patterns" value="baseline"/>
</dbReference>
<dbReference type="GO" id="GO:0005737">
    <property type="term" value="C:cytoplasm"/>
    <property type="evidence" value="ECO:0000250"/>
    <property type="project" value="UniProtKB"/>
</dbReference>
<dbReference type="GO" id="GO:0004869">
    <property type="term" value="F:cysteine-type endopeptidase inhibitor activity"/>
    <property type="evidence" value="ECO:0007669"/>
    <property type="project" value="UniProtKB-KW"/>
</dbReference>
<dbReference type="GO" id="GO:0043027">
    <property type="term" value="F:cysteine-type endopeptidase inhibitor activity involved in apoptotic process"/>
    <property type="evidence" value="ECO:0000250"/>
    <property type="project" value="UniProtKB"/>
</dbReference>
<dbReference type="GO" id="GO:0004842">
    <property type="term" value="F:ubiquitin-protein transferase activity"/>
    <property type="evidence" value="ECO:0000250"/>
    <property type="project" value="UniProtKB"/>
</dbReference>
<dbReference type="GO" id="GO:0008270">
    <property type="term" value="F:zinc ion binding"/>
    <property type="evidence" value="ECO:0007669"/>
    <property type="project" value="UniProtKB-KW"/>
</dbReference>
<dbReference type="GO" id="GO:0006915">
    <property type="term" value="P:apoptotic process"/>
    <property type="evidence" value="ECO:0007669"/>
    <property type="project" value="UniProtKB-KW"/>
</dbReference>
<dbReference type="GO" id="GO:0043066">
    <property type="term" value="P:negative regulation of apoptotic process"/>
    <property type="evidence" value="ECO:0000250"/>
    <property type="project" value="UniProtKB"/>
</dbReference>
<dbReference type="GO" id="GO:0045861">
    <property type="term" value="P:negative regulation of proteolysis"/>
    <property type="evidence" value="ECO:0000250"/>
    <property type="project" value="UniProtKB"/>
</dbReference>
<dbReference type="GO" id="GO:0070431">
    <property type="term" value="P:nucleotide-binding oligomerization domain containing 2 signaling pathway"/>
    <property type="evidence" value="ECO:0000250"/>
    <property type="project" value="UniProtKB"/>
</dbReference>
<dbReference type="GO" id="GO:0043123">
    <property type="term" value="P:positive regulation of canonical NF-kappaB signal transduction"/>
    <property type="evidence" value="ECO:0000250"/>
    <property type="project" value="UniProtKB"/>
</dbReference>
<dbReference type="GO" id="GO:1902530">
    <property type="term" value="P:positive regulation of protein linear polyubiquitination"/>
    <property type="evidence" value="ECO:0000250"/>
    <property type="project" value="UniProtKB"/>
</dbReference>
<dbReference type="GO" id="GO:0016055">
    <property type="term" value="P:Wnt signaling pathway"/>
    <property type="evidence" value="ECO:0007669"/>
    <property type="project" value="UniProtKB-KW"/>
</dbReference>
<dbReference type="CDD" id="cd00022">
    <property type="entry name" value="BIR"/>
    <property type="match status" value="3"/>
</dbReference>
<dbReference type="CDD" id="cd16714">
    <property type="entry name" value="RING-HC_BIRC4_8"/>
    <property type="match status" value="1"/>
</dbReference>
<dbReference type="FunFam" id="3.30.40.10:FF:000184">
    <property type="entry name" value="Baculoviral IAP repeat containing 2"/>
    <property type="match status" value="1"/>
</dbReference>
<dbReference type="FunFam" id="1.10.1170.10:FF:000002">
    <property type="entry name" value="Baculoviral IAP repeat containing 7"/>
    <property type="match status" value="1"/>
</dbReference>
<dbReference type="FunFam" id="1.10.1170.10:FF:000003">
    <property type="entry name" value="E3 ubiquitin-protein ligase XIAP"/>
    <property type="match status" value="1"/>
</dbReference>
<dbReference type="FunFam" id="1.10.1170.10:FF:000011">
    <property type="entry name" value="E3 ubiquitin-protein ligase XIAP"/>
    <property type="match status" value="1"/>
</dbReference>
<dbReference type="FunFam" id="1.10.8.10:FF:000084">
    <property type="entry name" value="E3 ubiquitin-protein ligase XIAP"/>
    <property type="match status" value="1"/>
</dbReference>
<dbReference type="FunFam" id="1.10.1170.10:FF:000008">
    <property type="entry name" value="Putative e3 ubiquitin-protein ligase xiap"/>
    <property type="match status" value="1"/>
</dbReference>
<dbReference type="Gene3D" id="1.10.8.10">
    <property type="entry name" value="DNA helicase RuvA subunit, C-terminal domain"/>
    <property type="match status" value="1"/>
</dbReference>
<dbReference type="Gene3D" id="1.10.1170.10">
    <property type="entry name" value="Inhibitor Of Apoptosis Protein (2mihbC-IAP-1), Chain A"/>
    <property type="match status" value="3"/>
</dbReference>
<dbReference type="Gene3D" id="3.30.40.10">
    <property type="entry name" value="Zinc/RING finger domain, C3HC4 (zinc finger)"/>
    <property type="match status" value="1"/>
</dbReference>
<dbReference type="InterPro" id="IPR001370">
    <property type="entry name" value="BIR_rpt"/>
</dbReference>
<dbReference type="InterPro" id="IPR050784">
    <property type="entry name" value="IAP"/>
</dbReference>
<dbReference type="InterPro" id="IPR001841">
    <property type="entry name" value="Znf_RING"/>
</dbReference>
<dbReference type="InterPro" id="IPR013083">
    <property type="entry name" value="Znf_RING/FYVE/PHD"/>
</dbReference>
<dbReference type="PANTHER" id="PTHR10044:SF115">
    <property type="entry name" value="E3 UBIQUITIN-PROTEIN LIGASE XIAP"/>
    <property type="match status" value="1"/>
</dbReference>
<dbReference type="PANTHER" id="PTHR10044">
    <property type="entry name" value="INHIBITOR OF APOPTOSIS"/>
    <property type="match status" value="1"/>
</dbReference>
<dbReference type="Pfam" id="PF00653">
    <property type="entry name" value="BIR"/>
    <property type="match status" value="3"/>
</dbReference>
<dbReference type="Pfam" id="PF13920">
    <property type="entry name" value="zf-C3HC4_3"/>
    <property type="match status" value="1"/>
</dbReference>
<dbReference type="SMART" id="SM00238">
    <property type="entry name" value="BIR"/>
    <property type="match status" value="3"/>
</dbReference>
<dbReference type="SMART" id="SM00184">
    <property type="entry name" value="RING"/>
    <property type="match status" value="1"/>
</dbReference>
<dbReference type="SUPFAM" id="SSF57924">
    <property type="entry name" value="Inhibitor of apoptosis (IAP) repeat"/>
    <property type="match status" value="3"/>
</dbReference>
<dbReference type="PROSITE" id="PS01282">
    <property type="entry name" value="BIR_REPEAT_1"/>
    <property type="match status" value="2"/>
</dbReference>
<dbReference type="PROSITE" id="PS50143">
    <property type="entry name" value="BIR_REPEAT_2"/>
    <property type="match status" value="3"/>
</dbReference>
<dbReference type="PROSITE" id="PS50089">
    <property type="entry name" value="ZF_RING_2"/>
    <property type="match status" value="1"/>
</dbReference>
<gene>
    <name type="primary">xiap</name>
    <name evidence="7" type="synonym">birc4</name>
</gene>
<reference evidence="7" key="1">
    <citation type="submission" date="2005-03" db="EMBL/GenBank/DDBJ databases">
        <authorList>
            <consortium name="NIH - Xenopus Gene Collection (XGC) project"/>
        </authorList>
    </citation>
    <scope>NUCLEOTIDE SEQUENCE [LARGE SCALE MRNA]</scope>
    <source>
        <strain evidence="7">F6</strain>
    </source>
</reference>
<keyword id="KW-0053">Apoptosis</keyword>
<keyword id="KW-0963">Cytoplasm</keyword>
<keyword id="KW-0217">Developmental protein</keyword>
<keyword id="KW-0479">Metal-binding</keyword>
<keyword id="KW-0646">Protease inhibitor</keyword>
<keyword id="KW-1185">Reference proteome</keyword>
<keyword id="KW-0677">Repeat</keyword>
<keyword id="KW-0789">Thiol protease inhibitor</keyword>
<keyword id="KW-0808">Transferase</keyword>
<keyword id="KW-0833">Ubl conjugation pathway</keyword>
<keyword id="KW-0879">Wnt signaling pathway</keyword>
<keyword id="KW-0862">Zinc</keyword>
<keyword id="KW-0863">Zinc-finger</keyword>